<dbReference type="EMBL" id="AP006715">
    <property type="protein sequence ID" value="BAE92377.1"/>
    <property type="molecule type" value="Genomic_DNA"/>
</dbReference>
<dbReference type="RefSeq" id="YP_536934.1">
    <property type="nucleotide sequence ID" value="NC_007932.1"/>
</dbReference>
<dbReference type="SMR" id="Q1XDN4"/>
<dbReference type="GeneID" id="3978849"/>
<dbReference type="GO" id="GO:0009507">
    <property type="term" value="C:chloroplast"/>
    <property type="evidence" value="ECO:0007669"/>
    <property type="project" value="UniProtKB-SubCell"/>
</dbReference>
<dbReference type="GO" id="GO:0015935">
    <property type="term" value="C:small ribosomal subunit"/>
    <property type="evidence" value="ECO:0007669"/>
    <property type="project" value="TreeGrafter"/>
</dbReference>
<dbReference type="GO" id="GO:0070181">
    <property type="term" value="F:small ribosomal subunit rRNA binding"/>
    <property type="evidence" value="ECO:0007669"/>
    <property type="project" value="TreeGrafter"/>
</dbReference>
<dbReference type="GO" id="GO:0003735">
    <property type="term" value="F:structural constituent of ribosome"/>
    <property type="evidence" value="ECO:0007669"/>
    <property type="project" value="InterPro"/>
</dbReference>
<dbReference type="GO" id="GO:0006412">
    <property type="term" value="P:translation"/>
    <property type="evidence" value="ECO:0007669"/>
    <property type="project" value="UniProtKB-UniRule"/>
</dbReference>
<dbReference type="Gene3D" id="1.20.58.110">
    <property type="entry name" value="Ribosomal protein S20"/>
    <property type="match status" value="1"/>
</dbReference>
<dbReference type="HAMAP" id="MF_00500">
    <property type="entry name" value="Ribosomal_bS20"/>
    <property type="match status" value="1"/>
</dbReference>
<dbReference type="InterPro" id="IPR002583">
    <property type="entry name" value="Ribosomal_bS20"/>
</dbReference>
<dbReference type="InterPro" id="IPR036510">
    <property type="entry name" value="Ribosomal_bS20_sf"/>
</dbReference>
<dbReference type="NCBIfam" id="TIGR00029">
    <property type="entry name" value="S20"/>
    <property type="match status" value="1"/>
</dbReference>
<dbReference type="PANTHER" id="PTHR33398">
    <property type="entry name" value="30S RIBOSOMAL PROTEIN S20"/>
    <property type="match status" value="1"/>
</dbReference>
<dbReference type="PANTHER" id="PTHR33398:SF1">
    <property type="entry name" value="SMALL RIBOSOMAL SUBUNIT PROTEIN BS20C"/>
    <property type="match status" value="1"/>
</dbReference>
<dbReference type="Pfam" id="PF01649">
    <property type="entry name" value="Ribosomal_S20p"/>
    <property type="match status" value="1"/>
</dbReference>
<dbReference type="SUPFAM" id="SSF46992">
    <property type="entry name" value="Ribosomal protein S20"/>
    <property type="match status" value="1"/>
</dbReference>
<name>RR20_PYRYE</name>
<keyword id="KW-0150">Chloroplast</keyword>
<keyword id="KW-0934">Plastid</keyword>
<keyword id="KW-0687">Ribonucleoprotein</keyword>
<keyword id="KW-0689">Ribosomal protein</keyword>
<keyword id="KW-0694">RNA-binding</keyword>
<keyword id="KW-0699">rRNA-binding</keyword>
<evidence type="ECO:0000255" key="1">
    <source>
        <dbReference type="HAMAP-Rule" id="MF_00500"/>
    </source>
</evidence>
<evidence type="ECO:0000305" key="2"/>
<sequence length="95" mass="10835">MAKNLSAIKRIKTSERNRLINRKYKSVVKTLTKRCLLNIDNLESDNFNDVQSSISQVYSKIDKAVKKGAFHPNTGARKKARLARALSFAQKNRID</sequence>
<accession>Q1XDN4</accession>
<gene>
    <name evidence="1" type="primary">rps20</name>
</gene>
<geneLocation type="chloroplast"/>
<proteinExistence type="inferred from homology"/>
<reference key="1">
    <citation type="submission" date="2003-11" db="EMBL/GenBank/DDBJ databases">
        <title>Whole genome sequence of Porphyra yezoensis chloroplast.</title>
        <authorList>
            <person name="Kunimoto M."/>
            <person name="Morishima K."/>
            <person name="Yoshikawa M."/>
            <person name="Fukuda S."/>
            <person name="Kobayashi T."/>
            <person name="Kobayashi M."/>
            <person name="Okazaki T."/>
            <person name="Ohara I."/>
            <person name="Nakayama I."/>
        </authorList>
    </citation>
    <scope>NUCLEOTIDE SEQUENCE [LARGE SCALE GENOMIC DNA]</scope>
    <source>
        <strain>U-51</strain>
    </source>
</reference>
<organism>
    <name type="scientific">Pyropia yezoensis</name>
    <name type="common">Susabi-nori</name>
    <name type="synonym">Porphyra yezoensis</name>
    <dbReference type="NCBI Taxonomy" id="2788"/>
    <lineage>
        <taxon>Eukaryota</taxon>
        <taxon>Rhodophyta</taxon>
        <taxon>Bangiophyceae</taxon>
        <taxon>Bangiales</taxon>
        <taxon>Bangiaceae</taxon>
        <taxon>Pyropia</taxon>
    </lineage>
</organism>
<protein>
    <recommendedName>
        <fullName evidence="1">Small ribosomal subunit protein bS20c</fullName>
    </recommendedName>
    <alternativeName>
        <fullName evidence="2">30S ribosomal protein S20, chloroplastic</fullName>
    </alternativeName>
</protein>
<feature type="chain" id="PRO_0000236467" description="Small ribosomal subunit protein bS20c">
    <location>
        <begin position="1"/>
        <end position="95"/>
    </location>
</feature>
<comment type="function">
    <text evidence="1">Binds directly to 16S ribosomal RNA.</text>
</comment>
<comment type="subcellular location">
    <subcellularLocation>
        <location>Plastid</location>
        <location>Chloroplast</location>
    </subcellularLocation>
</comment>
<comment type="similarity">
    <text evidence="1">Belongs to the bacterial ribosomal protein bS20 family.</text>
</comment>